<comment type="function">
    <text evidence="3 5">Component of the subcortical maternal complex (SCMC), a multiprotein complex that plays a key role in early embryonic development (By similarity). The SCMC complex is a structural constituent of cytoplasmic lattices, which consist in fibrous structures found in the cytoplasm of oocytes and preimplantation embryos (By similarity). They are required to store maternal proteins critical for embryonic development, such as proteins that control epigenetic reprogramming of the preimplantation embryo, and prevent their degradation or activation (By similarity). KHDC3 ensures proper spindle assembly by regulating the localization of AURKA via RHOA signaling and of PLK1 via a RHOA-independent process (By similarity). Required for the localization of MAD2L1 to kinetochores to enable spindle assembly checkpoint function (By similarity). As part of the OOEP-KHDC3 scaffold, recruits BLM and TRIM25 to DNA replication forks, thereby promoting the ubiquitination of BLM by TRIM25, enhancing BLM retainment at replication forks and therefore promoting stalled replication fork restart (PubMed:33115731). Regulates homologous recombination-mediated DNA repair via recruitment of RAD51 to sites of DNA double-strand breaks, and sustainment of PARP1 activity, which in turn modulates downstream ATM or ATR activation (By similarity). Activation of ATM or ATR in response to DNA double-strand breaks may be cell-type specific (By similarity). Its role in DNA double-strand break repair is independent of its role in restarting stalled replication forks (By similarity). Promotes neural stem cell neurogenesis and neuronal differentiation in the hippocampus (By similarity). May regulate normal development of learning, memory and anxiety (By similarity). Capable of binding RNA (By similarity).</text>
</comment>
<comment type="subunit">
    <text evidence="1 2 3">Component of the subcortical maternal complex (SCMC), at least composed of NLRP5, KHDC3L, OOEP, and TLE6 (By similarity). Within the complex, interacts with NLRP5, KHDC3L and TLE6 (By similarity). The SCMC may facilitate translocation of its components between the nuclear and cytoplasmic compartments (By similarity). Forms a scaffold complex with OOEP/FLOPED, and interacts with BLM and TRIM25 at DNA replication forks (By similarity). Interacts with PARP1; the interaction is increased following the formation of DNA double-strand breaks (By similarity). Interacts with NUMA1 (By similarity).</text>
</comment>
<comment type="subcellular location">
    <subcellularLocation>
        <location evidence="3">Cytoplasm</location>
    </subcellularLocation>
    <subcellularLocation>
        <location evidence="3">Cytoplasm</location>
        <location evidence="3">Cell cortex</location>
    </subcellularLocation>
    <subcellularLocation>
        <location evidence="3">Nucleus</location>
    </subcellularLocation>
    <subcellularLocation>
        <location evidence="3">Mitochondrion</location>
    </subcellularLocation>
    <subcellularLocation>
        <location evidence="3">Cytoplasm</location>
        <location evidence="3">Cytoskeleton</location>
        <location evidence="3">Microtubule organizing center</location>
        <location evidence="3">Centrosome</location>
    </subcellularLocation>
    <subcellularLocation>
        <location evidence="2">Chromosome</location>
    </subcellularLocation>
    <text evidence="2 3">Core component of cytoplasmic lattices in oocytes (By similarity). Expressed in the subcortex of oocytes. Located throughout the cell cortex of ovulated eggs in a complex with NLRP5. After fertilization, restricted to the apical cortex and excluded from regions of cell-cell contact. Localized to centrosomes during interphase and mitosis (By similarity). Localizes to sites of DNA double-strand break repair (By similarity).</text>
</comment>
<comment type="developmental stage">
    <text evidence="5">Expressed in fetal neural stem progenitor cells in the brain (at protein levels).</text>
</comment>
<comment type="induction">
    <text evidence="5">Induced by etoposide and hydroxy urea in neural stem cells.</text>
</comment>
<comment type="domain">
    <text evidence="3">Contains 1 atypical KH domain, which is still capable of binding RNA.</text>
</comment>
<comment type="similarity">
    <text evidence="6">Belongs to the KHDC1 family.</text>
</comment>
<feature type="chain" id="PRO_0000453456" description="KH domain-containing protein 3">
    <location>
        <begin position="1"/>
        <end position="206"/>
    </location>
</feature>
<feature type="domain" description="KH; atypical" evidence="2">
    <location>
        <begin position="40"/>
        <end position="103"/>
    </location>
</feature>
<feature type="region of interest" description="Involved in RNA binding" evidence="3">
    <location>
        <begin position="1"/>
        <end position="40"/>
    </location>
</feature>
<feature type="region of interest" description="Disordered" evidence="4">
    <location>
        <begin position="144"/>
        <end position="206"/>
    </location>
</feature>
<feature type="compositionally biased region" description="Basic and acidic residues" evidence="4">
    <location>
        <begin position="144"/>
        <end position="153"/>
    </location>
</feature>
<feature type="compositionally biased region" description="Polar residues" evidence="4">
    <location>
        <begin position="166"/>
        <end position="183"/>
    </location>
</feature>
<feature type="modified residue" description="Phosphothreonine" evidence="2">
    <location>
        <position position="145"/>
    </location>
</feature>
<feature type="modified residue" description="Phosphoserine" evidence="3">
    <location>
        <position position="171"/>
    </location>
</feature>
<dbReference type="RefSeq" id="XP_001112378.2">
    <property type="nucleotide sequence ID" value="XM_001112378.4"/>
</dbReference>
<dbReference type="SMR" id="F6SZT2"/>
<dbReference type="FunCoup" id="F6SZT2">
    <property type="interactions" value="4"/>
</dbReference>
<dbReference type="STRING" id="9544.ENSMMUP00000013185"/>
<dbReference type="PaxDb" id="9544-ENSMMUP00000013185"/>
<dbReference type="Ensembl" id="ENSMMUT00000014079.3">
    <property type="protein sequence ID" value="ENSMMUP00000013185.2"/>
    <property type="gene ID" value="ENSMMUG00000010084.3"/>
</dbReference>
<dbReference type="GeneID" id="715808"/>
<dbReference type="VEuPathDB" id="HostDB:ENSMMUG00000010084"/>
<dbReference type="VGNC" id="VGNC:73951">
    <property type="gene designation" value="KHDC3L"/>
</dbReference>
<dbReference type="eggNOG" id="ENOG502QQIF">
    <property type="taxonomic scope" value="Eukaryota"/>
</dbReference>
<dbReference type="GeneTree" id="ENSGT00940000162601"/>
<dbReference type="HOGENOM" id="CLU_115458_0_0_1"/>
<dbReference type="InParanoid" id="F6SZT2"/>
<dbReference type="OMA" id="LSKRPYW"/>
<dbReference type="OrthoDB" id="9790568at2759"/>
<dbReference type="TreeFam" id="TF338690"/>
<dbReference type="Proteomes" id="UP000006718">
    <property type="component" value="Chromosome 4"/>
</dbReference>
<dbReference type="Bgee" id="ENSMMUG00000010084">
    <property type="expression patterns" value="Expressed in spermatid and 3 other cell types or tissues"/>
</dbReference>
<dbReference type="GO" id="GO:0005938">
    <property type="term" value="C:cell cortex"/>
    <property type="evidence" value="ECO:0007669"/>
    <property type="project" value="UniProtKB-SubCell"/>
</dbReference>
<dbReference type="GO" id="GO:0005813">
    <property type="term" value="C:centrosome"/>
    <property type="evidence" value="ECO:0007669"/>
    <property type="project" value="UniProtKB-SubCell"/>
</dbReference>
<dbReference type="GO" id="GO:0005694">
    <property type="term" value="C:chromosome"/>
    <property type="evidence" value="ECO:0007669"/>
    <property type="project" value="UniProtKB-SubCell"/>
</dbReference>
<dbReference type="GO" id="GO:0140095">
    <property type="term" value="C:cytoplasmic lattice"/>
    <property type="evidence" value="ECO:0000250"/>
    <property type="project" value="UniProtKB"/>
</dbReference>
<dbReference type="GO" id="GO:0005739">
    <property type="term" value="C:mitochondrion"/>
    <property type="evidence" value="ECO:0007669"/>
    <property type="project" value="UniProtKB-SubCell"/>
</dbReference>
<dbReference type="GO" id="GO:0005634">
    <property type="term" value="C:nucleus"/>
    <property type="evidence" value="ECO:0000250"/>
    <property type="project" value="UniProtKB"/>
</dbReference>
<dbReference type="GO" id="GO:0032991">
    <property type="term" value="C:protein-containing complex"/>
    <property type="evidence" value="ECO:0000318"/>
    <property type="project" value="GO_Central"/>
</dbReference>
<dbReference type="GO" id="GO:0106333">
    <property type="term" value="C:subcortical maternal complex"/>
    <property type="evidence" value="ECO:0007669"/>
    <property type="project" value="Ensembl"/>
</dbReference>
<dbReference type="GO" id="GO:0003723">
    <property type="term" value="F:RNA binding"/>
    <property type="evidence" value="ECO:0007669"/>
    <property type="project" value="InterPro"/>
</dbReference>
<dbReference type="GO" id="GO:0140094">
    <property type="term" value="F:structural constituent of cytoplasmic lattice"/>
    <property type="evidence" value="ECO:0000250"/>
    <property type="project" value="UniProtKB"/>
</dbReference>
<dbReference type="GO" id="GO:1900006">
    <property type="term" value="P:positive regulation of dendrite development"/>
    <property type="evidence" value="ECO:0000250"/>
    <property type="project" value="UniProtKB"/>
</dbReference>
<dbReference type="GO" id="GO:2000781">
    <property type="term" value="P:positive regulation of double-strand break repair"/>
    <property type="evidence" value="ECO:0000315"/>
    <property type="project" value="UniProtKB"/>
</dbReference>
<dbReference type="GO" id="GO:1905168">
    <property type="term" value="P:positive regulation of double-strand break repair via homologous recombination"/>
    <property type="evidence" value="ECO:0007669"/>
    <property type="project" value="Ensembl"/>
</dbReference>
<dbReference type="GO" id="GO:0050769">
    <property type="term" value="P:positive regulation of neurogenesis"/>
    <property type="evidence" value="ECO:0000250"/>
    <property type="project" value="UniProtKB"/>
</dbReference>
<dbReference type="GO" id="GO:0140089">
    <property type="term" value="P:protein storage"/>
    <property type="evidence" value="ECO:0000250"/>
    <property type="project" value="UniProtKB"/>
</dbReference>
<dbReference type="GO" id="GO:0032880">
    <property type="term" value="P:regulation of protein localization"/>
    <property type="evidence" value="ECO:0007669"/>
    <property type="project" value="Ensembl"/>
</dbReference>
<dbReference type="CDD" id="cd12795">
    <property type="entry name" value="FILIA_N_like"/>
    <property type="match status" value="1"/>
</dbReference>
<dbReference type="FunFam" id="3.30.1370.10:FF:000087">
    <property type="entry name" value="KH domain containing 3 like, subcortical maternal complex member"/>
    <property type="match status" value="1"/>
</dbReference>
<dbReference type="Gene3D" id="3.30.1370.10">
    <property type="entry name" value="K Homology domain, type 1"/>
    <property type="match status" value="1"/>
</dbReference>
<dbReference type="InterPro" id="IPR036612">
    <property type="entry name" value="KH_dom_type_1_sf"/>
</dbReference>
<dbReference type="InterPro" id="IPR051778">
    <property type="entry name" value="KHDC1"/>
</dbReference>
<dbReference type="InterPro" id="IPR031952">
    <property type="entry name" value="MOEP19_KH-like"/>
</dbReference>
<dbReference type="PANTHER" id="PTHR19447:SF15">
    <property type="entry name" value="KH DOMAIN-CONTAINING PROTEIN 3"/>
    <property type="match status" value="1"/>
</dbReference>
<dbReference type="PANTHER" id="PTHR19447">
    <property type="entry name" value="OOCYTE-EXPRESSED PROTEIN HOMOLOG-RELATED"/>
    <property type="match status" value="1"/>
</dbReference>
<dbReference type="Pfam" id="PF16005">
    <property type="entry name" value="MOEP19"/>
    <property type="match status" value="1"/>
</dbReference>
<proteinExistence type="evidence at transcript level"/>
<reference evidence="7" key="1">
    <citation type="journal article" date="2007" name="Science">
        <title>Evolutionary and biomedical insights from the rhesus macaque genome.</title>
        <authorList>
            <person name="Gibbs R.A."/>
            <person name="Rogers J."/>
            <person name="Katze M.G."/>
            <person name="Bumgarner R."/>
            <person name="Weinstock G.M."/>
            <person name="Mardis E.R."/>
            <person name="Remington K.A."/>
            <person name="Strausberg R.L."/>
            <person name="Venter J.C."/>
            <person name="Wilson R.K."/>
            <person name="Batzer M.A."/>
            <person name="Bustamante C.D."/>
            <person name="Eichler E.E."/>
            <person name="Hahn M.W."/>
            <person name="Hardison R.C."/>
            <person name="Makova K.D."/>
            <person name="Miller W."/>
            <person name="Milosavljevic A."/>
            <person name="Palermo R.E."/>
            <person name="Siepel A."/>
            <person name="Sikela J.M."/>
            <person name="Attaway T."/>
            <person name="Bell S."/>
            <person name="Bernard K.E."/>
            <person name="Buhay C.J."/>
            <person name="Chandrabose M.N."/>
            <person name="Dao M."/>
            <person name="Davis C."/>
            <person name="Delehaunty K.D."/>
            <person name="Ding Y."/>
            <person name="Dinh H.H."/>
            <person name="Dugan-Rocha S."/>
            <person name="Fulton L.A."/>
            <person name="Gabisi R.A."/>
            <person name="Garner T.T."/>
            <person name="Godfrey J."/>
            <person name="Hawes A.C."/>
            <person name="Hernandez J."/>
            <person name="Hines S."/>
            <person name="Holder M."/>
            <person name="Hume J."/>
            <person name="Jhangiani S.N."/>
            <person name="Joshi V."/>
            <person name="Khan Z.M."/>
            <person name="Kirkness E.F."/>
            <person name="Cree A."/>
            <person name="Fowler R.G."/>
            <person name="Lee S."/>
            <person name="Lewis L.R."/>
            <person name="Li Z."/>
            <person name="Liu Y.-S."/>
            <person name="Moore S.M."/>
            <person name="Muzny D."/>
            <person name="Nazareth L.V."/>
            <person name="Ngo D.N."/>
            <person name="Okwuonu G.O."/>
            <person name="Pai G."/>
            <person name="Parker D."/>
            <person name="Paul H.A."/>
            <person name="Pfannkoch C."/>
            <person name="Pohl C.S."/>
            <person name="Rogers Y.-H.C."/>
            <person name="Ruiz S.J."/>
            <person name="Sabo A."/>
            <person name="Santibanez J."/>
            <person name="Schneider B.W."/>
            <person name="Smith S.M."/>
            <person name="Sodergren E."/>
            <person name="Svatek A.F."/>
            <person name="Utterback T.R."/>
            <person name="Vattathil S."/>
            <person name="Warren W."/>
            <person name="White C.S."/>
            <person name="Chinwalla A.T."/>
            <person name="Feng Y."/>
            <person name="Halpern A.L."/>
            <person name="Hillier L.W."/>
            <person name="Huang X."/>
            <person name="Minx P."/>
            <person name="Nelson J.O."/>
            <person name="Pepin K.H."/>
            <person name="Qin X."/>
            <person name="Sutton G.G."/>
            <person name="Venter E."/>
            <person name="Walenz B.P."/>
            <person name="Wallis J.W."/>
            <person name="Worley K.C."/>
            <person name="Yang S.-P."/>
            <person name="Jones S.M."/>
            <person name="Marra M.A."/>
            <person name="Rocchi M."/>
            <person name="Schein J.E."/>
            <person name="Baertsch R."/>
            <person name="Clarke L."/>
            <person name="Csuros M."/>
            <person name="Glasscock J."/>
            <person name="Harris R.A."/>
            <person name="Havlak P."/>
            <person name="Jackson A.R."/>
            <person name="Jiang H."/>
            <person name="Liu Y."/>
            <person name="Messina D.N."/>
            <person name="Shen Y."/>
            <person name="Song H.X.-Z."/>
            <person name="Wylie T."/>
            <person name="Zhang L."/>
            <person name="Birney E."/>
            <person name="Han K."/>
            <person name="Konkel M.K."/>
            <person name="Lee J."/>
            <person name="Smit A.F.A."/>
            <person name="Ullmer B."/>
            <person name="Wang H."/>
            <person name="Xing J."/>
            <person name="Burhans R."/>
            <person name="Cheng Z."/>
            <person name="Karro J.E."/>
            <person name="Ma J."/>
            <person name="Raney B."/>
            <person name="She X."/>
            <person name="Cox M.J."/>
            <person name="Demuth J.P."/>
            <person name="Dumas L.J."/>
            <person name="Han S.-G."/>
            <person name="Hopkins J."/>
            <person name="Karimpour-Fard A."/>
            <person name="Kim Y.H."/>
            <person name="Pollack J.R."/>
            <person name="Vinar T."/>
            <person name="Addo-Quaye C."/>
            <person name="Degenhardt J."/>
            <person name="Denby A."/>
            <person name="Hubisz M.J."/>
            <person name="Indap A."/>
            <person name="Kosiol C."/>
            <person name="Lahn B.T."/>
            <person name="Lawson H.A."/>
            <person name="Marklein A."/>
            <person name="Nielsen R."/>
            <person name="Vallender E.J."/>
            <person name="Clark A.G."/>
            <person name="Ferguson B."/>
            <person name="Hernandez R.D."/>
            <person name="Hirani K."/>
            <person name="Kehrer-Sawatzki H."/>
            <person name="Kolb J."/>
            <person name="Patil S."/>
            <person name="Pu L.-L."/>
            <person name="Ren Y."/>
            <person name="Smith D.G."/>
            <person name="Wheeler D.A."/>
            <person name="Schenck I."/>
            <person name="Ball E.V."/>
            <person name="Chen R."/>
            <person name="Cooper D.N."/>
            <person name="Giardine B."/>
            <person name="Hsu F."/>
            <person name="Kent W.J."/>
            <person name="Lesk A."/>
            <person name="Nelson D.L."/>
            <person name="O'brien W.E."/>
            <person name="Pruefer K."/>
            <person name="Stenson P.D."/>
            <person name="Wallace J.C."/>
            <person name="Ke H."/>
            <person name="Liu X.-M."/>
            <person name="Wang P."/>
            <person name="Xiang A.P."/>
            <person name="Yang F."/>
            <person name="Barber G.P."/>
            <person name="Haussler D."/>
            <person name="Karolchik D."/>
            <person name="Kern A.D."/>
            <person name="Kuhn R.M."/>
            <person name="Smith K.E."/>
            <person name="Zwieg A.S."/>
        </authorList>
    </citation>
    <scope>NUCLEOTIDE SEQUENCE [LARGE SCALE GENOMIC DNA]</scope>
    <source>
        <strain evidence="7">17573</strain>
    </source>
</reference>
<reference evidence="6" key="2">
    <citation type="journal article" date="2020" name="Sci. Adv.">
        <title>Genome integrity and neurogenesis of postnatal hippocampal neural stem/progenitor cells require a unique regulator Filia.</title>
        <authorList>
            <person name="Li J."/>
            <person name="Shang Y."/>
            <person name="Wang L."/>
            <person name="Zhao B."/>
            <person name="Sun C."/>
            <person name="Li J."/>
            <person name="Liu S."/>
            <person name="Li C."/>
            <person name="Tang M."/>
            <person name="Meng F.L."/>
            <person name="Zheng P."/>
        </authorList>
    </citation>
    <scope>FUNCTION</scope>
    <scope>DEVELOPMENTAL STAGE</scope>
    <scope>INDUCTION</scope>
</reference>
<accession>F6SZT2</accession>
<keyword id="KW-0158">Chromosome</keyword>
<keyword id="KW-0963">Cytoplasm</keyword>
<keyword id="KW-0206">Cytoskeleton</keyword>
<keyword id="KW-0496">Mitochondrion</keyword>
<keyword id="KW-0539">Nucleus</keyword>
<keyword id="KW-0597">Phosphoprotein</keyword>
<keyword id="KW-1185">Reference proteome</keyword>
<protein>
    <recommendedName>
        <fullName evidence="6">KH domain-containing protein 3</fullName>
    </recommendedName>
    <alternativeName>
        <fullName evidence="2">ES cell-associated transcript 1 protein</fullName>
    </alternativeName>
    <alternativeName>
        <fullName evidence="2">KHDC3-like protein</fullName>
    </alternativeName>
</protein>
<name>KHDC3_MACMU</name>
<evidence type="ECO:0000250" key="1">
    <source>
        <dbReference type="UniProtKB" id="D3ZVV1"/>
    </source>
</evidence>
<evidence type="ECO:0000250" key="2">
    <source>
        <dbReference type="UniProtKB" id="Q587J8"/>
    </source>
</evidence>
<evidence type="ECO:0000250" key="3">
    <source>
        <dbReference type="UniProtKB" id="Q9CWU5"/>
    </source>
</evidence>
<evidence type="ECO:0000256" key="4">
    <source>
        <dbReference type="SAM" id="MobiDB-lite"/>
    </source>
</evidence>
<evidence type="ECO:0000269" key="5">
    <source>
    </source>
</evidence>
<evidence type="ECO:0000305" key="6"/>
<evidence type="ECO:0000312" key="7">
    <source>
        <dbReference type="Proteomes" id="UP000006718"/>
    </source>
</evidence>
<gene>
    <name type="primary">KHDC3L</name>
    <name evidence="2" type="synonym">ECAT1</name>
</gene>
<sequence length="206" mass="23241">MDTPRRFPTLVQLMQPKAMPVEVLGHLPKRFSWFHSEFLKNPKVVRLEVWLVEKIFGRDRERIPHVQGMSQILIHVNRLDPNGEAEILVFGRPSYQEDTIKMIMNLADYHRQLQAKGSGKALAQDVATKKAEIQLSSTEVREAGTQRSVEVREVGTQGSPVEVRETGTQQSLEAANQSGTQRSPEAASKAVTQRFSEDTRAPVTRL</sequence>
<organism evidence="7">
    <name type="scientific">Macaca mulatta</name>
    <name type="common">Rhesus macaque</name>
    <dbReference type="NCBI Taxonomy" id="9544"/>
    <lineage>
        <taxon>Eukaryota</taxon>
        <taxon>Metazoa</taxon>
        <taxon>Chordata</taxon>
        <taxon>Craniata</taxon>
        <taxon>Vertebrata</taxon>
        <taxon>Euteleostomi</taxon>
        <taxon>Mammalia</taxon>
        <taxon>Eutheria</taxon>
        <taxon>Euarchontoglires</taxon>
        <taxon>Primates</taxon>
        <taxon>Haplorrhini</taxon>
        <taxon>Catarrhini</taxon>
        <taxon>Cercopithecidae</taxon>
        <taxon>Cercopithecinae</taxon>
        <taxon>Macaca</taxon>
    </lineage>
</organism>